<protein>
    <recommendedName>
        <fullName>Probable beta-1,4-xylosyltransferase IRX10</fullName>
        <ecNumber>2.4.2.-</ecNumber>
    </recommendedName>
    <alternativeName>
        <fullName>Glucuronoxylan glucuronosyltransferase 1</fullName>
        <shortName>AtGUT1</shortName>
    </alternativeName>
    <alternativeName>
        <fullName>Glucuronoxylan glucuronosyltransferase 2</fullName>
    </alternativeName>
    <alternativeName>
        <fullName>Protein IRREGULAR XYLEM 10</fullName>
    </alternativeName>
    <alternativeName>
        <fullName>Xylan xylosyltransferase IRX10</fullName>
    </alternativeName>
</protein>
<proteinExistence type="evidence at transcript level"/>
<name>IRX10_ARATH</name>
<organism>
    <name type="scientific">Arabidopsis thaliana</name>
    <name type="common">Mouse-ear cress</name>
    <dbReference type="NCBI Taxonomy" id="3702"/>
    <lineage>
        <taxon>Eukaryota</taxon>
        <taxon>Viridiplantae</taxon>
        <taxon>Streptophyta</taxon>
        <taxon>Embryophyta</taxon>
        <taxon>Tracheophyta</taxon>
        <taxon>Spermatophyta</taxon>
        <taxon>Magnoliopsida</taxon>
        <taxon>eudicotyledons</taxon>
        <taxon>Gunneridae</taxon>
        <taxon>Pentapetalae</taxon>
        <taxon>rosids</taxon>
        <taxon>malvids</taxon>
        <taxon>Brassicales</taxon>
        <taxon>Brassicaceae</taxon>
        <taxon>Camelineae</taxon>
        <taxon>Arabidopsis</taxon>
    </lineage>
</organism>
<sequence length="412" mass="46843">MKIHSCLSAILLFLFFSASSAKQNVRTERISGSAGDVLEDDPVGKLKVYVYELPSKYNKKLLQKDPRCLTHMFAAEIFMHRFLLSSPVRTRNPDEADWFYTPIYPTCDLTPTGLPLPFKSPRMMRSSIQLISSNWPYWNRTEGADHFFVVPHDFGACFHYQEEKAIERGILPLLQRATLVQTFGQRNHVCLDEGSITIPPFAPPQKMQAHFIPPDIPRSIFVYFRGLFYDVNNDPEGGYYARGARAAVWENFKNNPLFDISTDHPTTYYEDMQRAIFCLCPLGWAPWSPRLVEAVVFGCIPVIIADDIVLPFADAIPWEEIGVFVAEKDVPELDTILTSIPTEVILRKQRLLANPSMKRAMLFPQPAQPGDAFHQILNGLARKLPHDKSIYLKTGEKALNWTAGPVADLKPW</sequence>
<accession>Q9FZJ1</accession>
<accession>W8PVA7</accession>
<comment type="function">
    <text evidence="5 6 7">Involved in the synthesis of the hemicellulose glucuronoxylan, a major component of secondary cell walls. Probably involved in the elongation of glucuronoxylan xylosyl backbone, especially in the formation of GlcUA side chain of xylans.</text>
</comment>
<comment type="subcellular location">
    <subcellularLocation>
        <location evidence="1">Golgi apparatus membrane</location>
        <topology evidence="1">Single-pass type II membrane protein</topology>
    </subcellularLocation>
</comment>
<comment type="tissue specificity">
    <text evidence="5 7">Limited to xylem cells. Expressed in the root tip, xylem cells of roots, and in the vasculature of roots, cotyledons and leaves.</text>
</comment>
<comment type="developmental stage">
    <text evidence="5">In flowers, restricted to anthers.</text>
</comment>
<comment type="disruption phenotype">
    <text evidence="4 5 6">Moderate IRX phenotype. Slight reduction of secondary wall thickness and xylan content in cell wall (PubMed:15980264, PubMed:18980662). Specific loss of the GlcUA side chain in xylans. Slightly short inflorescence and reduced fertility (PubMed:18980649).</text>
</comment>
<comment type="similarity">
    <text evidence="8">Belongs to the glycosyltransferase 47 family.</text>
</comment>
<comment type="online information" name="CAZY, the Carbohydrate Active enZYmes database">
    <link uri="https://www.cazy.org/GT64_all.html"/>
</comment>
<gene>
    <name type="primary">IRX10</name>
    <name type="synonym">GUT1</name>
    <name type="synonym">GUT2</name>
    <name type="ordered locus">At1g27440</name>
    <name type="ORF">F17L21.23</name>
</gene>
<dbReference type="EC" id="2.4.2.-"/>
<dbReference type="EMBL" id="KJ138982">
    <property type="protein sequence ID" value="AHL38922.1"/>
    <property type="molecule type" value="mRNA"/>
</dbReference>
<dbReference type="EMBL" id="AC004557">
    <property type="protein sequence ID" value="AAF99743.1"/>
    <property type="molecule type" value="Genomic_DNA"/>
</dbReference>
<dbReference type="EMBL" id="CP002684">
    <property type="protein sequence ID" value="AEE30830.1"/>
    <property type="molecule type" value="Genomic_DNA"/>
</dbReference>
<dbReference type="EMBL" id="BT022053">
    <property type="protein sequence ID" value="AAY25465.1"/>
    <property type="molecule type" value="mRNA"/>
</dbReference>
<dbReference type="EMBL" id="BT025555">
    <property type="protein sequence ID" value="ABF58973.1"/>
    <property type="molecule type" value="mRNA"/>
</dbReference>
<dbReference type="RefSeq" id="NP_174064.1">
    <property type="nucleotide sequence ID" value="NM_102508.3"/>
</dbReference>
<dbReference type="BioGRID" id="24870">
    <property type="interactions" value="9"/>
</dbReference>
<dbReference type="FunCoup" id="Q9FZJ1">
    <property type="interactions" value="33"/>
</dbReference>
<dbReference type="IntAct" id="Q9FZJ1">
    <property type="interactions" value="9"/>
</dbReference>
<dbReference type="STRING" id="3702.Q9FZJ1"/>
<dbReference type="CAZy" id="GT47">
    <property type="family name" value="Glycosyltransferase Family 47"/>
</dbReference>
<dbReference type="GlyCosmos" id="Q9FZJ1">
    <property type="glycosylation" value="2 sites, No reported glycans"/>
</dbReference>
<dbReference type="GlyGen" id="Q9FZJ1">
    <property type="glycosylation" value="2 sites"/>
</dbReference>
<dbReference type="PaxDb" id="3702-AT1G27440.1"/>
<dbReference type="ProteomicsDB" id="247050"/>
<dbReference type="EnsemblPlants" id="AT1G27440.1">
    <property type="protein sequence ID" value="AT1G27440.1"/>
    <property type="gene ID" value="AT1G27440"/>
</dbReference>
<dbReference type="GeneID" id="839635"/>
<dbReference type="Gramene" id="AT1G27440.1">
    <property type="protein sequence ID" value="AT1G27440.1"/>
    <property type="gene ID" value="AT1G27440"/>
</dbReference>
<dbReference type="KEGG" id="ath:AT1G27440"/>
<dbReference type="Araport" id="AT1G27440"/>
<dbReference type="TAIR" id="AT1G27440">
    <property type="gene designation" value="GUT2"/>
</dbReference>
<dbReference type="eggNOG" id="KOG1021">
    <property type="taxonomic scope" value="Eukaryota"/>
</dbReference>
<dbReference type="HOGENOM" id="CLU_039682_1_0_1"/>
<dbReference type="InParanoid" id="Q9FZJ1"/>
<dbReference type="OMA" id="AMMFPQP"/>
<dbReference type="OrthoDB" id="1924787at2759"/>
<dbReference type="PhylomeDB" id="Q9FZJ1"/>
<dbReference type="BioCyc" id="ARA:AT1G27440-MONOMER"/>
<dbReference type="PRO" id="PR:Q9FZJ1"/>
<dbReference type="Proteomes" id="UP000006548">
    <property type="component" value="Chromosome 1"/>
</dbReference>
<dbReference type="ExpressionAtlas" id="Q9FZJ1">
    <property type="expression patterns" value="baseline and differential"/>
</dbReference>
<dbReference type="GO" id="GO:0000139">
    <property type="term" value="C:Golgi membrane"/>
    <property type="evidence" value="ECO:0007669"/>
    <property type="project" value="UniProtKB-SubCell"/>
</dbReference>
<dbReference type="GO" id="GO:0047517">
    <property type="term" value="F:1,4-beta-D-xylan synthase activity"/>
    <property type="evidence" value="ECO:0000314"/>
    <property type="project" value="TAIR"/>
</dbReference>
<dbReference type="GO" id="GO:0080116">
    <property type="term" value="F:glucuronoxylan glucuronosyltransferase activity"/>
    <property type="evidence" value="ECO:0000315"/>
    <property type="project" value="TAIR"/>
</dbReference>
<dbReference type="GO" id="GO:0071555">
    <property type="term" value="P:cell wall organization"/>
    <property type="evidence" value="ECO:0007669"/>
    <property type="project" value="UniProtKB-KW"/>
</dbReference>
<dbReference type="GO" id="GO:0010417">
    <property type="term" value="P:glucuronoxylan biosynthetic process"/>
    <property type="evidence" value="ECO:0000315"/>
    <property type="project" value="TAIR"/>
</dbReference>
<dbReference type="GO" id="GO:0009834">
    <property type="term" value="P:plant-type secondary cell wall biogenesis"/>
    <property type="evidence" value="ECO:0000315"/>
    <property type="project" value="TAIR"/>
</dbReference>
<dbReference type="GO" id="GO:0006486">
    <property type="term" value="P:protein glycosylation"/>
    <property type="evidence" value="ECO:0007669"/>
    <property type="project" value="InterPro"/>
</dbReference>
<dbReference type="InterPro" id="IPR004263">
    <property type="entry name" value="Exostosin"/>
</dbReference>
<dbReference type="InterPro" id="IPR040911">
    <property type="entry name" value="Exostosin_GT47"/>
</dbReference>
<dbReference type="PANTHER" id="PTHR11062:SF370">
    <property type="entry name" value="BETA-1,4-XYLOSYLTRANSFERASE IRX10-RELATED"/>
    <property type="match status" value="1"/>
</dbReference>
<dbReference type="PANTHER" id="PTHR11062">
    <property type="entry name" value="EXOSTOSIN HEPARAN SULFATE GLYCOSYLTRANSFERASE -RELATED"/>
    <property type="match status" value="1"/>
</dbReference>
<dbReference type="Pfam" id="PF03016">
    <property type="entry name" value="Exostosin_GT47"/>
    <property type="match status" value="1"/>
</dbReference>
<keyword id="KW-0961">Cell wall biogenesis/degradation</keyword>
<keyword id="KW-0325">Glycoprotein</keyword>
<keyword id="KW-0328">Glycosyltransferase</keyword>
<keyword id="KW-0333">Golgi apparatus</keyword>
<keyword id="KW-0472">Membrane</keyword>
<keyword id="KW-1185">Reference proteome</keyword>
<keyword id="KW-0735">Signal-anchor</keyword>
<keyword id="KW-0808">Transferase</keyword>
<keyword id="KW-0812">Transmembrane</keyword>
<keyword id="KW-1133">Transmembrane helix</keyword>
<reference key="1">
    <citation type="journal article" date="2014" name="Plant J.">
        <title>The plant glycosyltransferase clone collection for functional genomics.</title>
        <authorList>
            <person name="Lao J."/>
            <person name="Oikawa A."/>
            <person name="Bromley J.R."/>
            <person name="McInerney P."/>
            <person name="Suttangkakul A."/>
            <person name="Smith-Moritz A.M."/>
            <person name="Plahar H."/>
            <person name="Chiu T.-Y."/>
            <person name="Gonzalez Fernandez-Nino S.M.G."/>
            <person name="Ebert B."/>
            <person name="Yang F."/>
            <person name="Christiansen K.M."/>
            <person name="Hansen S.F."/>
            <person name="Stonebloom S."/>
            <person name="Adams P.D."/>
            <person name="Ronald P.C."/>
            <person name="Hillson N.J."/>
            <person name="Hadi M.Z."/>
            <person name="Vega-Sanchez M.E."/>
            <person name="Loque D."/>
            <person name="Scheller H.V."/>
            <person name="Heazlewood J.L."/>
        </authorList>
    </citation>
    <scope>NUCLEOTIDE SEQUENCE [MRNA]</scope>
    <scope>WEB RESOURCE</scope>
    <scope>GENE FAMILY</scope>
    <source>
        <strain>cv. Columbia</strain>
    </source>
</reference>
<reference key="2">
    <citation type="journal article" date="2000" name="Nature">
        <title>Sequence and analysis of chromosome 1 of the plant Arabidopsis thaliana.</title>
        <authorList>
            <person name="Theologis A."/>
            <person name="Ecker J.R."/>
            <person name="Palm C.J."/>
            <person name="Federspiel N.A."/>
            <person name="Kaul S."/>
            <person name="White O."/>
            <person name="Alonso J."/>
            <person name="Altafi H."/>
            <person name="Araujo R."/>
            <person name="Bowman C.L."/>
            <person name="Brooks S.Y."/>
            <person name="Buehler E."/>
            <person name="Chan A."/>
            <person name="Chao Q."/>
            <person name="Chen H."/>
            <person name="Cheuk R.F."/>
            <person name="Chin C.W."/>
            <person name="Chung M.K."/>
            <person name="Conn L."/>
            <person name="Conway A.B."/>
            <person name="Conway A.R."/>
            <person name="Creasy T.H."/>
            <person name="Dewar K."/>
            <person name="Dunn P."/>
            <person name="Etgu P."/>
            <person name="Feldblyum T.V."/>
            <person name="Feng J.-D."/>
            <person name="Fong B."/>
            <person name="Fujii C.Y."/>
            <person name="Gill J.E."/>
            <person name="Goldsmith A.D."/>
            <person name="Haas B."/>
            <person name="Hansen N.F."/>
            <person name="Hughes B."/>
            <person name="Huizar L."/>
            <person name="Hunter J.L."/>
            <person name="Jenkins J."/>
            <person name="Johnson-Hopson C."/>
            <person name="Khan S."/>
            <person name="Khaykin E."/>
            <person name="Kim C.J."/>
            <person name="Koo H.L."/>
            <person name="Kremenetskaia I."/>
            <person name="Kurtz D.B."/>
            <person name="Kwan A."/>
            <person name="Lam B."/>
            <person name="Langin-Hooper S."/>
            <person name="Lee A."/>
            <person name="Lee J.M."/>
            <person name="Lenz C.A."/>
            <person name="Li J.H."/>
            <person name="Li Y.-P."/>
            <person name="Lin X."/>
            <person name="Liu S.X."/>
            <person name="Liu Z.A."/>
            <person name="Luros J.S."/>
            <person name="Maiti R."/>
            <person name="Marziali A."/>
            <person name="Militscher J."/>
            <person name="Miranda M."/>
            <person name="Nguyen M."/>
            <person name="Nierman W.C."/>
            <person name="Osborne B.I."/>
            <person name="Pai G."/>
            <person name="Peterson J."/>
            <person name="Pham P.K."/>
            <person name="Rizzo M."/>
            <person name="Rooney T."/>
            <person name="Rowley D."/>
            <person name="Sakano H."/>
            <person name="Salzberg S.L."/>
            <person name="Schwartz J.R."/>
            <person name="Shinn P."/>
            <person name="Southwick A.M."/>
            <person name="Sun H."/>
            <person name="Tallon L.J."/>
            <person name="Tambunga G."/>
            <person name="Toriumi M.J."/>
            <person name="Town C.D."/>
            <person name="Utterback T."/>
            <person name="Van Aken S."/>
            <person name="Vaysberg M."/>
            <person name="Vysotskaia V.S."/>
            <person name="Walker M."/>
            <person name="Wu D."/>
            <person name="Yu G."/>
            <person name="Fraser C.M."/>
            <person name="Venter J.C."/>
            <person name="Davis R.W."/>
        </authorList>
    </citation>
    <scope>NUCLEOTIDE SEQUENCE [LARGE SCALE GENOMIC DNA]</scope>
    <source>
        <strain>cv. Columbia</strain>
    </source>
</reference>
<reference key="3">
    <citation type="journal article" date="2017" name="Plant J.">
        <title>Araport11: a complete reannotation of the Arabidopsis thaliana reference genome.</title>
        <authorList>
            <person name="Cheng C.Y."/>
            <person name="Krishnakumar V."/>
            <person name="Chan A.P."/>
            <person name="Thibaud-Nissen F."/>
            <person name="Schobel S."/>
            <person name="Town C.D."/>
        </authorList>
    </citation>
    <scope>GENOME REANNOTATION</scope>
    <source>
        <strain>cv. Columbia</strain>
    </source>
</reference>
<reference key="4">
    <citation type="submission" date="2005-05" db="EMBL/GenBank/DDBJ databases">
        <title>Arabidopsis ORF clones.</title>
        <authorList>
            <person name="Cheuk R.F."/>
            <person name="Chen H."/>
            <person name="Kim C.J."/>
            <person name="Shinn P."/>
            <person name="Ecker J.R."/>
        </authorList>
    </citation>
    <scope>NUCLEOTIDE SEQUENCE [LARGE SCALE MRNA]</scope>
    <source>
        <strain>cv. Columbia</strain>
    </source>
</reference>
<reference key="5">
    <citation type="submission" date="2006-05" db="EMBL/GenBank/DDBJ databases">
        <title>Arabidopsis ORF clones.</title>
        <authorList>
            <person name="Shinn P."/>
            <person name="Chen H."/>
            <person name="Kim C.J."/>
            <person name="Quinitio C."/>
            <person name="Ecker J.R."/>
        </authorList>
    </citation>
    <scope>NUCLEOTIDE SEQUENCE [LARGE SCALE MRNA]</scope>
    <source>
        <strain>cv. Columbia</strain>
    </source>
</reference>
<reference key="6">
    <citation type="journal article" date="2005" name="Plant Cell">
        <title>Identification of novel genes in Arabidopsis involved in secondary cell wall formation using expression profiling and reverse genetics.</title>
        <authorList>
            <person name="Brown D.M."/>
            <person name="Zeef L.A.H."/>
            <person name="Ellis J."/>
            <person name="Goodacre R."/>
            <person name="Turner S.R."/>
        </authorList>
    </citation>
    <scope>DISRUPTION PHENOTYPE</scope>
</reference>
<reference key="7">
    <citation type="journal article" date="2009" name="Plant J.">
        <title>The Arabidopsis IRX10 and IRX10-LIKE glycosyltransferases are critical for glucuronoxylan biosynthesis during secondary cell wall formation.</title>
        <authorList>
            <person name="Wu A.-M."/>
            <person name="Rihouey C."/>
            <person name="Seveno M."/>
            <person name="Hoernblad E."/>
            <person name="Singh S.K."/>
            <person name="Matsunaga T."/>
            <person name="Ishii T."/>
            <person name="Lerouge P."/>
            <person name="Marchant A."/>
        </authorList>
    </citation>
    <scope>FUNCTION</scope>
    <scope>DISRUPTION PHENOTYPE</scope>
    <scope>TISSUE SPECIFICITY</scope>
    <scope>DEVELOPMENTAL STAGE</scope>
</reference>
<reference key="8">
    <citation type="journal article" date="2009" name="Plant J.">
        <title>Characterization of IRX10 and IRX10-like reveals an essential role in glucuronoxylan biosynthesis in Arabidopsis.</title>
        <authorList>
            <person name="Brown D.M."/>
            <person name="Zhang Z."/>
            <person name="Stephens E."/>
            <person name="Dupree P."/>
            <person name="Turner S.R."/>
        </authorList>
    </citation>
    <scope>FUNCTION</scope>
    <scope>DISRUPTION PHENOTYPE</scope>
</reference>
<reference key="9">
    <citation type="journal article" date="2010" name="Plant Physiol.">
        <title>Analysis of the Arabidopsis IRX9/IRX9-L and IRX14/IRX14-L pairs of glycosyltransferase genes reveals critical contributions to biosynthesis of the hemicellulose glucuronoxylan.</title>
        <authorList>
            <person name="Wu A.M."/>
            <person name="Hoernblad E."/>
            <person name="Voxeur A."/>
            <person name="Gerber L."/>
            <person name="Rihouey C."/>
            <person name="Lerouge P."/>
            <person name="Marchant A."/>
        </authorList>
    </citation>
    <scope>FUNCTION</scope>
    <scope>TISSUE SPECIFICITY</scope>
</reference>
<evidence type="ECO:0000250" key="1">
    <source>
        <dbReference type="UniProtKB" id="Q9ZUV3"/>
    </source>
</evidence>
<evidence type="ECO:0000255" key="2"/>
<evidence type="ECO:0000255" key="3">
    <source>
        <dbReference type="PROSITE-ProRule" id="PRU00498"/>
    </source>
</evidence>
<evidence type="ECO:0000269" key="4">
    <source>
    </source>
</evidence>
<evidence type="ECO:0000269" key="5">
    <source>
    </source>
</evidence>
<evidence type="ECO:0000269" key="6">
    <source>
    </source>
</evidence>
<evidence type="ECO:0000269" key="7">
    <source>
    </source>
</evidence>
<evidence type="ECO:0000305" key="8"/>
<feature type="chain" id="PRO_0000407576" description="Probable beta-1,4-xylosyltransferase IRX10">
    <location>
        <begin position="1"/>
        <end position="412"/>
    </location>
</feature>
<feature type="transmembrane region" description="Helical; Signal-anchor for type II membrane protein" evidence="2">
    <location>
        <begin position="1"/>
        <end position="21"/>
    </location>
</feature>
<feature type="topological domain" description="Lumenal" evidence="2">
    <location>
        <begin position="22"/>
        <end position="412"/>
    </location>
</feature>
<feature type="glycosylation site" description="N-linked (GlcNAc...) asparagine" evidence="3">
    <location>
        <position position="139"/>
    </location>
</feature>
<feature type="glycosylation site" description="N-linked (GlcNAc...) asparagine" evidence="3">
    <location>
        <position position="400"/>
    </location>
</feature>